<organism>
    <name type="scientific">Burkholderia cenocepacia (strain HI2424)</name>
    <dbReference type="NCBI Taxonomy" id="331272"/>
    <lineage>
        <taxon>Bacteria</taxon>
        <taxon>Pseudomonadati</taxon>
        <taxon>Pseudomonadota</taxon>
        <taxon>Betaproteobacteria</taxon>
        <taxon>Burkholderiales</taxon>
        <taxon>Burkholderiaceae</taxon>
        <taxon>Burkholderia</taxon>
        <taxon>Burkholderia cepacia complex</taxon>
    </lineage>
</organism>
<keyword id="KW-0963">Cytoplasm</keyword>
<keyword id="KW-0460">Magnesium</keyword>
<keyword id="KW-0479">Metal-binding</keyword>
<keyword id="KW-0566">Pantothenate biosynthesis</keyword>
<keyword id="KW-0808">Transferase</keyword>
<gene>
    <name evidence="1" type="primary">panB1</name>
    <name type="ordered locus">Bcen2424_0755</name>
</gene>
<name>PANB1_BURCH</name>
<comment type="function">
    <text evidence="1">Catalyzes the reversible reaction in which hydroxymethyl group from 5,10-methylenetetrahydrofolate is transferred onto alpha-ketoisovalerate to form ketopantoate.</text>
</comment>
<comment type="catalytic activity">
    <reaction evidence="1">
        <text>3-methyl-2-oxobutanoate + (6R)-5,10-methylene-5,6,7,8-tetrahydrofolate + H2O = 2-dehydropantoate + (6S)-5,6,7,8-tetrahydrofolate</text>
        <dbReference type="Rhea" id="RHEA:11824"/>
        <dbReference type="ChEBI" id="CHEBI:11561"/>
        <dbReference type="ChEBI" id="CHEBI:11851"/>
        <dbReference type="ChEBI" id="CHEBI:15377"/>
        <dbReference type="ChEBI" id="CHEBI:15636"/>
        <dbReference type="ChEBI" id="CHEBI:57453"/>
        <dbReference type="EC" id="2.1.2.11"/>
    </reaction>
</comment>
<comment type="cofactor">
    <cofactor evidence="1">
        <name>Mg(2+)</name>
        <dbReference type="ChEBI" id="CHEBI:18420"/>
    </cofactor>
    <text evidence="1">Binds 1 Mg(2+) ion per subunit.</text>
</comment>
<comment type="pathway">
    <text evidence="1">Cofactor biosynthesis; (R)-pantothenate biosynthesis; (R)-pantoate from 3-methyl-2-oxobutanoate: step 1/2.</text>
</comment>
<comment type="subunit">
    <text evidence="1">Homodecamer; pentamer of dimers.</text>
</comment>
<comment type="subcellular location">
    <subcellularLocation>
        <location evidence="1">Cytoplasm</location>
    </subcellularLocation>
</comment>
<comment type="similarity">
    <text evidence="1">Belongs to the PanB family.</text>
</comment>
<protein>
    <recommendedName>
        <fullName evidence="1">3-methyl-2-oxobutanoate hydroxymethyltransferase 1</fullName>
        <ecNumber evidence="1">2.1.2.11</ecNumber>
    </recommendedName>
    <alternativeName>
        <fullName evidence="1">Ketopantoate hydroxymethyltransferase 1</fullName>
        <shortName evidence="1">KPHMT 1</shortName>
    </alternativeName>
</protein>
<feature type="chain" id="PRO_0000297229" description="3-methyl-2-oxobutanoate hydroxymethyltransferase 1">
    <location>
        <begin position="1"/>
        <end position="271"/>
    </location>
</feature>
<feature type="active site" description="Proton acceptor" evidence="1">
    <location>
        <position position="189"/>
    </location>
</feature>
<feature type="binding site" evidence="1">
    <location>
        <begin position="53"/>
        <end position="54"/>
    </location>
    <ligand>
        <name>3-methyl-2-oxobutanoate</name>
        <dbReference type="ChEBI" id="CHEBI:11851"/>
    </ligand>
</feature>
<feature type="binding site" evidence="1">
    <location>
        <position position="53"/>
    </location>
    <ligand>
        <name>Mg(2+)</name>
        <dbReference type="ChEBI" id="CHEBI:18420"/>
    </ligand>
</feature>
<feature type="binding site" evidence="1">
    <location>
        <position position="92"/>
    </location>
    <ligand>
        <name>3-methyl-2-oxobutanoate</name>
        <dbReference type="ChEBI" id="CHEBI:11851"/>
    </ligand>
</feature>
<feature type="binding site" evidence="1">
    <location>
        <position position="92"/>
    </location>
    <ligand>
        <name>Mg(2+)</name>
        <dbReference type="ChEBI" id="CHEBI:18420"/>
    </ligand>
</feature>
<feature type="binding site" evidence="1">
    <location>
        <position position="120"/>
    </location>
    <ligand>
        <name>3-methyl-2-oxobutanoate</name>
        <dbReference type="ChEBI" id="CHEBI:11851"/>
    </ligand>
</feature>
<feature type="binding site" evidence="1">
    <location>
        <position position="122"/>
    </location>
    <ligand>
        <name>Mg(2+)</name>
        <dbReference type="ChEBI" id="CHEBI:18420"/>
    </ligand>
</feature>
<proteinExistence type="inferred from homology"/>
<accession>A0K4T1</accession>
<dbReference type="EC" id="2.1.2.11" evidence="1"/>
<dbReference type="EMBL" id="CP000458">
    <property type="protein sequence ID" value="ABK07508.1"/>
    <property type="molecule type" value="Genomic_DNA"/>
</dbReference>
<dbReference type="SMR" id="A0K4T1"/>
<dbReference type="KEGG" id="bch:Bcen2424_0755"/>
<dbReference type="HOGENOM" id="CLU_036645_1_0_4"/>
<dbReference type="UniPathway" id="UPA00028">
    <property type="reaction ID" value="UER00003"/>
</dbReference>
<dbReference type="GO" id="GO:0005737">
    <property type="term" value="C:cytoplasm"/>
    <property type="evidence" value="ECO:0007669"/>
    <property type="project" value="UniProtKB-SubCell"/>
</dbReference>
<dbReference type="GO" id="GO:0003864">
    <property type="term" value="F:3-methyl-2-oxobutanoate hydroxymethyltransferase activity"/>
    <property type="evidence" value="ECO:0007669"/>
    <property type="project" value="UniProtKB-UniRule"/>
</dbReference>
<dbReference type="GO" id="GO:0000287">
    <property type="term" value="F:magnesium ion binding"/>
    <property type="evidence" value="ECO:0007669"/>
    <property type="project" value="TreeGrafter"/>
</dbReference>
<dbReference type="GO" id="GO:0015940">
    <property type="term" value="P:pantothenate biosynthetic process"/>
    <property type="evidence" value="ECO:0007669"/>
    <property type="project" value="UniProtKB-UniRule"/>
</dbReference>
<dbReference type="CDD" id="cd06557">
    <property type="entry name" value="KPHMT-like"/>
    <property type="match status" value="1"/>
</dbReference>
<dbReference type="FunFam" id="3.20.20.60:FF:000003">
    <property type="entry name" value="3-methyl-2-oxobutanoate hydroxymethyltransferase"/>
    <property type="match status" value="1"/>
</dbReference>
<dbReference type="Gene3D" id="3.20.20.60">
    <property type="entry name" value="Phosphoenolpyruvate-binding domains"/>
    <property type="match status" value="1"/>
</dbReference>
<dbReference type="HAMAP" id="MF_00156">
    <property type="entry name" value="PanB"/>
    <property type="match status" value="1"/>
</dbReference>
<dbReference type="InterPro" id="IPR003700">
    <property type="entry name" value="Pantoate_hydroxy_MeTrfase"/>
</dbReference>
<dbReference type="InterPro" id="IPR015813">
    <property type="entry name" value="Pyrv/PenolPyrv_kinase-like_dom"/>
</dbReference>
<dbReference type="InterPro" id="IPR040442">
    <property type="entry name" value="Pyrv_kinase-like_dom_sf"/>
</dbReference>
<dbReference type="NCBIfam" id="TIGR00222">
    <property type="entry name" value="panB"/>
    <property type="match status" value="1"/>
</dbReference>
<dbReference type="NCBIfam" id="NF001452">
    <property type="entry name" value="PRK00311.1"/>
    <property type="match status" value="1"/>
</dbReference>
<dbReference type="PANTHER" id="PTHR20881">
    <property type="entry name" value="3-METHYL-2-OXOBUTANOATE HYDROXYMETHYLTRANSFERASE"/>
    <property type="match status" value="1"/>
</dbReference>
<dbReference type="PANTHER" id="PTHR20881:SF0">
    <property type="entry name" value="3-METHYL-2-OXOBUTANOATE HYDROXYMETHYLTRANSFERASE"/>
    <property type="match status" value="1"/>
</dbReference>
<dbReference type="Pfam" id="PF02548">
    <property type="entry name" value="Pantoate_transf"/>
    <property type="match status" value="1"/>
</dbReference>
<dbReference type="PIRSF" id="PIRSF000388">
    <property type="entry name" value="Pantoate_hydroxy_MeTrfase"/>
    <property type="match status" value="1"/>
</dbReference>
<dbReference type="SUPFAM" id="SSF51621">
    <property type="entry name" value="Phosphoenolpyruvate/pyruvate domain"/>
    <property type="match status" value="1"/>
</dbReference>
<sequence>MTYLQESSRPAVTVPKLQAMRDAGEKIAMLTCYDASFSALLDRAGTDVLLIGDSLGNVLQGHTTTLPVSIDDIAYHTACVARAQPRALVVADLPFGTYGTPVDAFANAVKLMRAGAQMVKLEGGEWLADTIRFLVERSVPVCAHLGLTPQSVHAFGGFKVQGKTEAGAAQLLRDARAIEDAGAQLVVLEAVPTLVAAEVTHMLKIPTIGIGAGVDCSGQVLVLHDMLGVFPGKRPRFVKDFMQGQPNIQAAVEAYVSAVKDRSFPGPEHSF</sequence>
<evidence type="ECO:0000255" key="1">
    <source>
        <dbReference type="HAMAP-Rule" id="MF_00156"/>
    </source>
</evidence>
<reference key="1">
    <citation type="submission" date="2006-08" db="EMBL/GenBank/DDBJ databases">
        <title>Complete sequence of chromosome 1 of Burkholderia cenocepacia HI2424.</title>
        <authorList>
            <person name="Copeland A."/>
            <person name="Lucas S."/>
            <person name="Lapidus A."/>
            <person name="Barry K."/>
            <person name="Detter J.C."/>
            <person name="Glavina del Rio T."/>
            <person name="Hammon N."/>
            <person name="Israni S."/>
            <person name="Pitluck S."/>
            <person name="Chain P."/>
            <person name="Malfatti S."/>
            <person name="Shin M."/>
            <person name="Vergez L."/>
            <person name="Schmutz J."/>
            <person name="Larimer F."/>
            <person name="Land M."/>
            <person name="Hauser L."/>
            <person name="Kyrpides N."/>
            <person name="Kim E."/>
            <person name="LiPuma J.J."/>
            <person name="Gonzalez C.F."/>
            <person name="Konstantinidis K."/>
            <person name="Tiedje J.M."/>
            <person name="Richardson P."/>
        </authorList>
    </citation>
    <scope>NUCLEOTIDE SEQUENCE [LARGE SCALE GENOMIC DNA]</scope>
    <source>
        <strain>HI2424</strain>
    </source>
</reference>